<evidence type="ECO:0000255" key="1">
    <source>
        <dbReference type="HAMAP-Rule" id="MF_00089"/>
    </source>
</evidence>
<keyword id="KW-0004">4Fe-4S</keyword>
<keyword id="KW-0408">Iron</keyword>
<keyword id="KW-0411">Iron-sulfur</keyword>
<keyword id="KW-0456">Lyase</keyword>
<keyword id="KW-0479">Metal-binding</keyword>
<keyword id="KW-1185">Reference proteome</keyword>
<keyword id="KW-0949">S-adenosyl-L-methionine</keyword>
<keyword id="KW-0784">Thiamine biosynthesis</keyword>
<keyword id="KW-0862">Zinc</keyword>
<gene>
    <name evidence="1" type="primary">thiC</name>
    <name type="ordered locus">SYNPCC7002_A0831</name>
</gene>
<reference key="1">
    <citation type="submission" date="2008-02" db="EMBL/GenBank/DDBJ databases">
        <title>Complete sequence of Synechococcus sp. PCC 7002.</title>
        <authorList>
            <person name="Li T."/>
            <person name="Zhao J."/>
            <person name="Zhao C."/>
            <person name="Liu Z."/>
            <person name="Zhao F."/>
            <person name="Marquardt J."/>
            <person name="Nomura C.T."/>
            <person name="Persson S."/>
            <person name="Detter J.C."/>
            <person name="Richardson P.M."/>
            <person name="Lanz C."/>
            <person name="Schuster S.C."/>
            <person name="Wang J."/>
            <person name="Li S."/>
            <person name="Huang X."/>
            <person name="Cai T."/>
            <person name="Yu Z."/>
            <person name="Luo J."/>
            <person name="Zhao J."/>
            <person name="Bryant D.A."/>
        </authorList>
    </citation>
    <scope>NUCLEOTIDE SEQUENCE [LARGE SCALE GENOMIC DNA]</scope>
    <source>
        <strain>ATCC 27264 / PCC 7002 / PR-6</strain>
    </source>
</reference>
<protein>
    <recommendedName>
        <fullName evidence="1">Phosphomethylpyrimidine synthase</fullName>
        <ecNumber evidence="1">4.1.99.17</ecNumber>
    </recommendedName>
    <alternativeName>
        <fullName evidence="1">Hydroxymethylpyrimidine phosphate synthase</fullName>
        <shortName evidence="1">HMP-P synthase</shortName>
        <shortName evidence="1">HMP-phosphate synthase</shortName>
        <shortName evidence="1">HMPP synthase</shortName>
    </alternativeName>
    <alternativeName>
        <fullName evidence="1">Thiamine biosynthesis protein ThiC</fullName>
    </alternativeName>
</protein>
<organism>
    <name type="scientific">Picosynechococcus sp. (strain ATCC 27264 / PCC 7002 / PR-6)</name>
    <name type="common">Agmenellum quadruplicatum</name>
    <dbReference type="NCBI Taxonomy" id="32049"/>
    <lineage>
        <taxon>Bacteria</taxon>
        <taxon>Bacillati</taxon>
        <taxon>Cyanobacteriota</taxon>
        <taxon>Cyanophyceae</taxon>
        <taxon>Oscillatoriophycideae</taxon>
        <taxon>Chroococcales</taxon>
        <taxon>Geminocystaceae</taxon>
        <taxon>Picosynechococcus</taxon>
    </lineage>
</organism>
<name>THIC_PICP2</name>
<feature type="chain" id="PRO_1000093240" description="Phosphomethylpyrimidine synthase">
    <location>
        <begin position="1"/>
        <end position="461"/>
    </location>
</feature>
<feature type="binding site" evidence="1">
    <location>
        <position position="80"/>
    </location>
    <ligand>
        <name>substrate</name>
    </ligand>
</feature>
<feature type="binding site" evidence="1">
    <location>
        <position position="109"/>
    </location>
    <ligand>
        <name>substrate</name>
    </ligand>
</feature>
<feature type="binding site" evidence="1">
    <location>
        <position position="139"/>
    </location>
    <ligand>
        <name>substrate</name>
    </ligand>
</feature>
<feature type="binding site" evidence="1">
    <location>
        <position position="175"/>
    </location>
    <ligand>
        <name>substrate</name>
    </ligand>
</feature>
<feature type="binding site" evidence="1">
    <location>
        <begin position="195"/>
        <end position="197"/>
    </location>
    <ligand>
        <name>substrate</name>
    </ligand>
</feature>
<feature type="binding site" evidence="1">
    <location>
        <begin position="236"/>
        <end position="239"/>
    </location>
    <ligand>
        <name>substrate</name>
    </ligand>
</feature>
<feature type="binding site" evidence="1">
    <location>
        <position position="275"/>
    </location>
    <ligand>
        <name>substrate</name>
    </ligand>
</feature>
<feature type="binding site" evidence="1">
    <location>
        <position position="279"/>
    </location>
    <ligand>
        <name>Zn(2+)</name>
        <dbReference type="ChEBI" id="CHEBI:29105"/>
    </ligand>
</feature>
<feature type="binding site" evidence="1">
    <location>
        <position position="302"/>
    </location>
    <ligand>
        <name>substrate</name>
    </ligand>
</feature>
<feature type="binding site" evidence="1">
    <location>
        <position position="343"/>
    </location>
    <ligand>
        <name>Zn(2+)</name>
        <dbReference type="ChEBI" id="CHEBI:29105"/>
    </ligand>
</feature>
<feature type="binding site" evidence="1">
    <location>
        <position position="423"/>
    </location>
    <ligand>
        <name>[4Fe-4S] cluster</name>
        <dbReference type="ChEBI" id="CHEBI:49883"/>
        <note>4Fe-4S-S-AdoMet</note>
    </ligand>
</feature>
<feature type="binding site" evidence="1">
    <location>
        <position position="426"/>
    </location>
    <ligand>
        <name>[4Fe-4S] cluster</name>
        <dbReference type="ChEBI" id="CHEBI:49883"/>
        <note>4Fe-4S-S-AdoMet</note>
    </ligand>
</feature>
<feature type="binding site" evidence="1">
    <location>
        <position position="431"/>
    </location>
    <ligand>
        <name>[4Fe-4S] cluster</name>
        <dbReference type="ChEBI" id="CHEBI:49883"/>
        <note>4Fe-4S-S-AdoMet</note>
    </ligand>
</feature>
<comment type="function">
    <text evidence="1">Catalyzes the synthesis of the hydroxymethylpyrimidine phosphate (HMP-P) moiety of thiamine from aminoimidazole ribotide (AIR) in a radical S-adenosyl-L-methionine (SAM)-dependent reaction.</text>
</comment>
<comment type="catalytic activity">
    <reaction evidence="1">
        <text>5-amino-1-(5-phospho-beta-D-ribosyl)imidazole + S-adenosyl-L-methionine = 4-amino-2-methyl-5-(phosphooxymethyl)pyrimidine + CO + 5'-deoxyadenosine + formate + L-methionine + 3 H(+)</text>
        <dbReference type="Rhea" id="RHEA:24840"/>
        <dbReference type="ChEBI" id="CHEBI:15378"/>
        <dbReference type="ChEBI" id="CHEBI:15740"/>
        <dbReference type="ChEBI" id="CHEBI:17245"/>
        <dbReference type="ChEBI" id="CHEBI:17319"/>
        <dbReference type="ChEBI" id="CHEBI:57844"/>
        <dbReference type="ChEBI" id="CHEBI:58354"/>
        <dbReference type="ChEBI" id="CHEBI:59789"/>
        <dbReference type="ChEBI" id="CHEBI:137981"/>
        <dbReference type="EC" id="4.1.99.17"/>
    </reaction>
</comment>
<comment type="cofactor">
    <cofactor evidence="1">
        <name>[4Fe-4S] cluster</name>
        <dbReference type="ChEBI" id="CHEBI:49883"/>
    </cofactor>
    <text evidence="1">Binds 1 [4Fe-4S] cluster per subunit. The cluster is coordinated with 3 cysteines and an exchangeable S-adenosyl-L-methionine.</text>
</comment>
<comment type="pathway">
    <text evidence="1">Cofactor biosynthesis; thiamine diphosphate biosynthesis.</text>
</comment>
<comment type="similarity">
    <text evidence="1">Belongs to the ThiC family.</text>
</comment>
<sequence>MRADWVAKRQGQSNVSQMHYARQGVITEEMDYVAKRENLPVDLIRDEVARGRMIIPANINHTNLEPMCIGIASKCKVNANIGASPNSSEINEELAKLQQAVKYGADTVMDLSTGGGNLDEIRTAIIKASPVPIGTVPIYQALESVHGNMENLTANDFLHIIEKHAQQGVDYMTIHAGILIEHLPLVKNRITGIVSRGGGILARWMLHHHKQNPLYTHFDDIIEIFKRYDVSFSLGDSLRPGCTHDASDEAQLAELKTLGQLTRRAWEHDVQVMVEGPGHVPMDQIEFNVKKQMEECSEAPFYVLGPLVTDIAPGYDHITSAIGAAMAGWYGTAMLCYVTPKEHLGLPDAEDVRNGLIAYKIAAHAADIARHRPGARDRDDELSHARYNFDWEKQFELSLDPERAREYHDETLPADIYKTAEFCSMCGPKFCPMQTKVDADALTELEKYLASTAAKEELAKA</sequence>
<proteinExistence type="inferred from homology"/>
<accession>B1XIG4</accession>
<dbReference type="EC" id="4.1.99.17" evidence="1"/>
<dbReference type="EMBL" id="CP000951">
    <property type="protein sequence ID" value="ACA98835.1"/>
    <property type="molecule type" value="Genomic_DNA"/>
</dbReference>
<dbReference type="RefSeq" id="WP_012306459.1">
    <property type="nucleotide sequence ID" value="NZ_JAHHPU010000001.1"/>
</dbReference>
<dbReference type="SMR" id="B1XIG4"/>
<dbReference type="STRING" id="32049.SYNPCC7002_A0831"/>
<dbReference type="KEGG" id="syp:SYNPCC7002_A0831"/>
<dbReference type="eggNOG" id="COG0422">
    <property type="taxonomic scope" value="Bacteria"/>
</dbReference>
<dbReference type="HOGENOM" id="CLU_013181_2_1_3"/>
<dbReference type="UniPathway" id="UPA00060"/>
<dbReference type="Proteomes" id="UP000001688">
    <property type="component" value="Chromosome"/>
</dbReference>
<dbReference type="GO" id="GO:0005829">
    <property type="term" value="C:cytosol"/>
    <property type="evidence" value="ECO:0007669"/>
    <property type="project" value="TreeGrafter"/>
</dbReference>
<dbReference type="GO" id="GO:0051539">
    <property type="term" value="F:4 iron, 4 sulfur cluster binding"/>
    <property type="evidence" value="ECO:0007669"/>
    <property type="project" value="UniProtKB-KW"/>
</dbReference>
<dbReference type="GO" id="GO:0016830">
    <property type="term" value="F:carbon-carbon lyase activity"/>
    <property type="evidence" value="ECO:0007669"/>
    <property type="project" value="InterPro"/>
</dbReference>
<dbReference type="GO" id="GO:0008270">
    <property type="term" value="F:zinc ion binding"/>
    <property type="evidence" value="ECO:0007669"/>
    <property type="project" value="UniProtKB-UniRule"/>
</dbReference>
<dbReference type="GO" id="GO:0009228">
    <property type="term" value="P:thiamine biosynthetic process"/>
    <property type="evidence" value="ECO:0007669"/>
    <property type="project" value="UniProtKB-KW"/>
</dbReference>
<dbReference type="GO" id="GO:0009229">
    <property type="term" value="P:thiamine diphosphate biosynthetic process"/>
    <property type="evidence" value="ECO:0007669"/>
    <property type="project" value="UniProtKB-UniRule"/>
</dbReference>
<dbReference type="FunFam" id="3.20.20.540:FF:000001">
    <property type="entry name" value="Phosphomethylpyrimidine synthase"/>
    <property type="match status" value="1"/>
</dbReference>
<dbReference type="Gene3D" id="6.10.250.620">
    <property type="match status" value="1"/>
</dbReference>
<dbReference type="Gene3D" id="3.20.20.540">
    <property type="entry name" value="Radical SAM ThiC family, central domain"/>
    <property type="match status" value="1"/>
</dbReference>
<dbReference type="HAMAP" id="MF_00089">
    <property type="entry name" value="ThiC"/>
    <property type="match status" value="1"/>
</dbReference>
<dbReference type="InterPro" id="IPR037509">
    <property type="entry name" value="ThiC"/>
</dbReference>
<dbReference type="InterPro" id="IPR038521">
    <property type="entry name" value="ThiC/Bza_core_dom"/>
</dbReference>
<dbReference type="InterPro" id="IPR002817">
    <property type="entry name" value="ThiC/BzaA/B"/>
</dbReference>
<dbReference type="NCBIfam" id="NF006763">
    <property type="entry name" value="PRK09284.1"/>
    <property type="match status" value="1"/>
</dbReference>
<dbReference type="NCBIfam" id="NF009895">
    <property type="entry name" value="PRK13352.1"/>
    <property type="match status" value="1"/>
</dbReference>
<dbReference type="NCBIfam" id="TIGR00190">
    <property type="entry name" value="thiC"/>
    <property type="match status" value="1"/>
</dbReference>
<dbReference type="PANTHER" id="PTHR30557:SF1">
    <property type="entry name" value="PHOSPHOMETHYLPYRIMIDINE SYNTHASE, CHLOROPLASTIC"/>
    <property type="match status" value="1"/>
</dbReference>
<dbReference type="PANTHER" id="PTHR30557">
    <property type="entry name" value="THIAMINE BIOSYNTHESIS PROTEIN THIC"/>
    <property type="match status" value="1"/>
</dbReference>
<dbReference type="Pfam" id="PF01964">
    <property type="entry name" value="ThiC_Rad_SAM"/>
    <property type="match status" value="1"/>
</dbReference>
<dbReference type="SFLD" id="SFLDF00407">
    <property type="entry name" value="phosphomethylpyrimidine_syntha"/>
    <property type="match status" value="1"/>
</dbReference>
<dbReference type="SFLD" id="SFLDG01114">
    <property type="entry name" value="phosphomethylpyrimidine_syntha"/>
    <property type="match status" value="1"/>
</dbReference>
<dbReference type="SFLD" id="SFLDS00113">
    <property type="entry name" value="Radical_SAM_Phosphomethylpyrim"/>
    <property type="match status" value="1"/>
</dbReference>